<protein>
    <recommendedName>
        <fullName evidence="1">Phosphopantetheine adenylyltransferase</fullName>
        <ecNumber evidence="1">2.7.7.3</ecNumber>
    </recommendedName>
    <alternativeName>
        <fullName evidence="1">Dephospho-CoA pyrophosphorylase</fullName>
    </alternativeName>
    <alternativeName>
        <fullName evidence="1">Pantetheine-phosphate adenylyltransferase</fullName>
        <shortName evidence="1">PPAT</shortName>
    </alternativeName>
</protein>
<comment type="function">
    <text evidence="1">Reversibly transfers an adenylyl group from ATP to 4'-phosphopantetheine, yielding dephospho-CoA (dPCoA) and pyrophosphate.</text>
</comment>
<comment type="catalytic activity">
    <reaction evidence="1">
        <text>(R)-4'-phosphopantetheine + ATP + H(+) = 3'-dephospho-CoA + diphosphate</text>
        <dbReference type="Rhea" id="RHEA:19801"/>
        <dbReference type="ChEBI" id="CHEBI:15378"/>
        <dbReference type="ChEBI" id="CHEBI:30616"/>
        <dbReference type="ChEBI" id="CHEBI:33019"/>
        <dbReference type="ChEBI" id="CHEBI:57328"/>
        <dbReference type="ChEBI" id="CHEBI:61723"/>
        <dbReference type="EC" id="2.7.7.3"/>
    </reaction>
</comment>
<comment type="cofactor">
    <cofactor evidence="1">
        <name>Mg(2+)</name>
        <dbReference type="ChEBI" id="CHEBI:18420"/>
    </cofactor>
</comment>
<comment type="pathway">
    <text evidence="1">Cofactor biosynthesis; coenzyme A biosynthesis; CoA from (R)-pantothenate: step 4/5.</text>
</comment>
<comment type="subunit">
    <text evidence="1">Homohexamer.</text>
</comment>
<comment type="subcellular location">
    <subcellularLocation>
        <location evidence="1">Cytoplasm</location>
    </subcellularLocation>
</comment>
<comment type="similarity">
    <text evidence="1">Belongs to the bacterial CoaD family.</text>
</comment>
<keyword id="KW-0067">ATP-binding</keyword>
<keyword id="KW-0173">Coenzyme A biosynthesis</keyword>
<keyword id="KW-0963">Cytoplasm</keyword>
<keyword id="KW-0460">Magnesium</keyword>
<keyword id="KW-0547">Nucleotide-binding</keyword>
<keyword id="KW-0548">Nucleotidyltransferase</keyword>
<keyword id="KW-0808">Transferase</keyword>
<dbReference type="EC" id="2.7.7.3" evidence="1"/>
<dbReference type="EMBL" id="CP001097">
    <property type="protein sequence ID" value="ACD90254.1"/>
    <property type="molecule type" value="Genomic_DNA"/>
</dbReference>
<dbReference type="RefSeq" id="WP_012466131.1">
    <property type="nucleotide sequence ID" value="NC_010803.1"/>
</dbReference>
<dbReference type="SMR" id="B3ECH9"/>
<dbReference type="STRING" id="290315.Clim_1186"/>
<dbReference type="KEGG" id="cli:Clim_1186"/>
<dbReference type="eggNOG" id="COG0669">
    <property type="taxonomic scope" value="Bacteria"/>
</dbReference>
<dbReference type="HOGENOM" id="CLU_100149_0_1_10"/>
<dbReference type="OrthoDB" id="9806661at2"/>
<dbReference type="UniPathway" id="UPA00241">
    <property type="reaction ID" value="UER00355"/>
</dbReference>
<dbReference type="Proteomes" id="UP000008841">
    <property type="component" value="Chromosome"/>
</dbReference>
<dbReference type="GO" id="GO:0005737">
    <property type="term" value="C:cytoplasm"/>
    <property type="evidence" value="ECO:0007669"/>
    <property type="project" value="UniProtKB-SubCell"/>
</dbReference>
<dbReference type="GO" id="GO:0005524">
    <property type="term" value="F:ATP binding"/>
    <property type="evidence" value="ECO:0007669"/>
    <property type="project" value="UniProtKB-KW"/>
</dbReference>
<dbReference type="GO" id="GO:0004595">
    <property type="term" value="F:pantetheine-phosphate adenylyltransferase activity"/>
    <property type="evidence" value="ECO:0007669"/>
    <property type="project" value="UniProtKB-UniRule"/>
</dbReference>
<dbReference type="GO" id="GO:0015937">
    <property type="term" value="P:coenzyme A biosynthetic process"/>
    <property type="evidence" value="ECO:0007669"/>
    <property type="project" value="UniProtKB-UniRule"/>
</dbReference>
<dbReference type="CDD" id="cd02163">
    <property type="entry name" value="PPAT"/>
    <property type="match status" value="1"/>
</dbReference>
<dbReference type="Gene3D" id="3.40.50.620">
    <property type="entry name" value="HUPs"/>
    <property type="match status" value="1"/>
</dbReference>
<dbReference type="HAMAP" id="MF_00151">
    <property type="entry name" value="PPAT_bact"/>
    <property type="match status" value="1"/>
</dbReference>
<dbReference type="InterPro" id="IPR004821">
    <property type="entry name" value="Cyt_trans-like"/>
</dbReference>
<dbReference type="InterPro" id="IPR001980">
    <property type="entry name" value="PPAT"/>
</dbReference>
<dbReference type="InterPro" id="IPR014729">
    <property type="entry name" value="Rossmann-like_a/b/a_fold"/>
</dbReference>
<dbReference type="NCBIfam" id="TIGR01510">
    <property type="entry name" value="coaD_prev_kdtB"/>
    <property type="match status" value="1"/>
</dbReference>
<dbReference type="NCBIfam" id="TIGR00125">
    <property type="entry name" value="cyt_tran_rel"/>
    <property type="match status" value="1"/>
</dbReference>
<dbReference type="PANTHER" id="PTHR21342">
    <property type="entry name" value="PHOSPHOPANTETHEINE ADENYLYLTRANSFERASE"/>
    <property type="match status" value="1"/>
</dbReference>
<dbReference type="PANTHER" id="PTHR21342:SF1">
    <property type="entry name" value="PHOSPHOPANTETHEINE ADENYLYLTRANSFERASE"/>
    <property type="match status" value="1"/>
</dbReference>
<dbReference type="Pfam" id="PF01467">
    <property type="entry name" value="CTP_transf_like"/>
    <property type="match status" value="1"/>
</dbReference>
<dbReference type="PRINTS" id="PR01020">
    <property type="entry name" value="LPSBIOSNTHSS"/>
</dbReference>
<dbReference type="SUPFAM" id="SSF52374">
    <property type="entry name" value="Nucleotidylyl transferase"/>
    <property type="match status" value="1"/>
</dbReference>
<feature type="chain" id="PRO_1000096776" description="Phosphopantetheine adenylyltransferase">
    <location>
        <begin position="1"/>
        <end position="170"/>
    </location>
</feature>
<feature type="binding site" evidence="1">
    <location>
        <begin position="10"/>
        <end position="11"/>
    </location>
    <ligand>
        <name>ATP</name>
        <dbReference type="ChEBI" id="CHEBI:30616"/>
    </ligand>
</feature>
<feature type="binding site" evidence="1">
    <location>
        <position position="10"/>
    </location>
    <ligand>
        <name>substrate</name>
    </ligand>
</feature>
<feature type="binding site" evidence="1">
    <location>
        <position position="18"/>
    </location>
    <ligand>
        <name>ATP</name>
        <dbReference type="ChEBI" id="CHEBI:30616"/>
    </ligand>
</feature>
<feature type="binding site" evidence="1">
    <location>
        <position position="42"/>
    </location>
    <ligand>
        <name>substrate</name>
    </ligand>
</feature>
<feature type="binding site" evidence="1">
    <location>
        <position position="75"/>
    </location>
    <ligand>
        <name>substrate</name>
    </ligand>
</feature>
<feature type="binding site" evidence="1">
    <location>
        <position position="89"/>
    </location>
    <ligand>
        <name>substrate</name>
    </ligand>
</feature>
<feature type="binding site" evidence="1">
    <location>
        <begin position="90"/>
        <end position="92"/>
    </location>
    <ligand>
        <name>ATP</name>
        <dbReference type="ChEBI" id="CHEBI:30616"/>
    </ligand>
</feature>
<feature type="binding site" evidence="1">
    <location>
        <position position="100"/>
    </location>
    <ligand>
        <name>ATP</name>
        <dbReference type="ChEBI" id="CHEBI:30616"/>
    </ligand>
</feature>
<feature type="binding site" evidence="1">
    <location>
        <begin position="125"/>
        <end position="131"/>
    </location>
    <ligand>
        <name>ATP</name>
        <dbReference type="ChEBI" id="CHEBI:30616"/>
    </ligand>
</feature>
<feature type="site" description="Transition state stabilizer" evidence="1">
    <location>
        <position position="18"/>
    </location>
</feature>
<organism>
    <name type="scientific">Chlorobium limicola (strain DSM 245 / NBRC 103803 / 6330)</name>
    <dbReference type="NCBI Taxonomy" id="290315"/>
    <lineage>
        <taxon>Bacteria</taxon>
        <taxon>Pseudomonadati</taxon>
        <taxon>Chlorobiota</taxon>
        <taxon>Chlorobiia</taxon>
        <taxon>Chlorobiales</taxon>
        <taxon>Chlorobiaceae</taxon>
        <taxon>Chlorobium/Pelodictyon group</taxon>
        <taxon>Chlorobium</taxon>
    </lineage>
</organism>
<evidence type="ECO:0000255" key="1">
    <source>
        <dbReference type="HAMAP-Rule" id="MF_00151"/>
    </source>
</evidence>
<reference key="1">
    <citation type="submission" date="2008-05" db="EMBL/GenBank/DDBJ databases">
        <title>Complete sequence of Chlorobium limicola DSM 245.</title>
        <authorList>
            <consortium name="US DOE Joint Genome Institute"/>
            <person name="Lucas S."/>
            <person name="Copeland A."/>
            <person name="Lapidus A."/>
            <person name="Glavina del Rio T."/>
            <person name="Dalin E."/>
            <person name="Tice H."/>
            <person name="Bruce D."/>
            <person name="Goodwin L."/>
            <person name="Pitluck S."/>
            <person name="Schmutz J."/>
            <person name="Larimer F."/>
            <person name="Land M."/>
            <person name="Hauser L."/>
            <person name="Kyrpides N."/>
            <person name="Ovchinnikova G."/>
            <person name="Zhao F."/>
            <person name="Li T."/>
            <person name="Liu Z."/>
            <person name="Overmann J."/>
            <person name="Bryant D.A."/>
            <person name="Richardson P."/>
        </authorList>
    </citation>
    <scope>NUCLEOTIDE SEQUENCE [LARGE SCALE GENOMIC DNA]</scope>
    <source>
        <strain>DSM 245 / NBRC 103803 / 6330</strain>
    </source>
</reference>
<gene>
    <name evidence="1" type="primary">coaD</name>
    <name type="ordered locus">Clim_1186</name>
</gene>
<proteinExistence type="inferred from homology"/>
<name>COAD_CHLL2</name>
<accession>B3ECH9</accession>
<sequence length="170" mass="19304">MTQKAIYPGTFDPFTNGHLDVLERALNIFQEVVVVIADNSQKQTLFSVEERLSMIREIIEDYPAVSVEVLHDGLLADYARQKGARAIVRGVRQVKDFEYEFQISLLNRHLYPEVTTVFLMPNVKYTYVASSIIKEVAMLGGDVSKFVHPSVLKSLHGKLDESKQHKPNNI</sequence>